<evidence type="ECO:0000250" key="1"/>
<evidence type="ECO:0000255" key="2"/>
<evidence type="ECO:0000269" key="3">
    <source>
    </source>
</evidence>
<evidence type="ECO:0000269" key="4">
    <source>
    </source>
</evidence>
<evidence type="ECO:0000269" key="5">
    <source>
    </source>
</evidence>
<evidence type="ECO:0000269" key="6">
    <source>
    </source>
</evidence>
<evidence type="ECO:0000269" key="7">
    <source>
    </source>
</evidence>
<evidence type="ECO:0000269" key="8">
    <source>
    </source>
</evidence>
<evidence type="ECO:0000269" key="9">
    <source>
    </source>
</evidence>
<evidence type="ECO:0000269" key="10">
    <source>
    </source>
</evidence>
<evidence type="ECO:0000269" key="11">
    <source>
    </source>
</evidence>
<evidence type="ECO:0000305" key="12"/>
<evidence type="ECO:0007829" key="13">
    <source>
        <dbReference type="PDB" id="6JCY"/>
    </source>
</evidence>
<dbReference type="EMBL" id="U87242">
    <property type="protein sequence ID" value="AAC45268.1"/>
    <property type="molecule type" value="Genomic_DNA"/>
</dbReference>
<dbReference type="EMBL" id="AL123456">
    <property type="protein sequence ID" value="CCP43977.1"/>
    <property type="molecule type" value="Genomic_DNA"/>
</dbReference>
<dbReference type="PIR" id="H70507">
    <property type="entry name" value="H70507"/>
</dbReference>
<dbReference type="RefSeq" id="NP_215737.1">
    <molecule id="P9WGG7-1"/>
    <property type="nucleotide sequence ID" value="NC_000962.3"/>
</dbReference>
<dbReference type="RefSeq" id="WP_003406257.1">
    <property type="nucleotide sequence ID" value="NZ_NVQJ01000039.1"/>
</dbReference>
<dbReference type="PDB" id="6JCY">
    <property type="method" value="X-ray"/>
    <property type="resolution" value="3.11 A"/>
    <property type="chains" value="F=150-190"/>
</dbReference>
<dbReference type="PDBsum" id="6JCY"/>
<dbReference type="SMR" id="P9WGG7"/>
<dbReference type="FunCoup" id="P9WGG7">
    <property type="interactions" value="4"/>
</dbReference>
<dbReference type="STRING" id="83332.Rv1221"/>
<dbReference type="PaxDb" id="83332-Rv1221"/>
<dbReference type="DNASU" id="888751"/>
<dbReference type="GeneID" id="45425191"/>
<dbReference type="GeneID" id="888751"/>
<dbReference type="KEGG" id="mtu:Rv1221"/>
<dbReference type="KEGG" id="mtv:RVBD_1221"/>
<dbReference type="TubercuList" id="Rv1221"/>
<dbReference type="eggNOG" id="COG1595">
    <property type="taxonomic scope" value="Bacteria"/>
</dbReference>
<dbReference type="InParanoid" id="P9WGG7"/>
<dbReference type="OrthoDB" id="9803470at2"/>
<dbReference type="PhylomeDB" id="P9WGG7"/>
<dbReference type="Proteomes" id="UP000001584">
    <property type="component" value="Chromosome"/>
</dbReference>
<dbReference type="GO" id="GO:0003677">
    <property type="term" value="F:DNA binding"/>
    <property type="evidence" value="ECO:0000314"/>
    <property type="project" value="MTBBASE"/>
</dbReference>
<dbReference type="GO" id="GO:0016987">
    <property type="term" value="F:sigma factor activity"/>
    <property type="evidence" value="ECO:0000314"/>
    <property type="project" value="MTBBASE"/>
</dbReference>
<dbReference type="GO" id="GO:0051701">
    <property type="term" value="P:biological process involved in interaction with host"/>
    <property type="evidence" value="ECO:0000315"/>
    <property type="project" value="MTBBASE"/>
</dbReference>
<dbReference type="GO" id="GO:0006352">
    <property type="term" value="P:DNA-templated transcription initiation"/>
    <property type="evidence" value="ECO:0007669"/>
    <property type="project" value="InterPro"/>
</dbReference>
<dbReference type="GO" id="GO:0006355">
    <property type="term" value="P:regulation of DNA-templated transcription"/>
    <property type="evidence" value="ECO:0000318"/>
    <property type="project" value="GO_Central"/>
</dbReference>
<dbReference type="GO" id="GO:0009408">
    <property type="term" value="P:response to heat"/>
    <property type="evidence" value="ECO:0000270"/>
    <property type="project" value="MTBBASE"/>
</dbReference>
<dbReference type="GO" id="GO:0009410">
    <property type="term" value="P:response to xenobiotic stimulus"/>
    <property type="evidence" value="ECO:0000270"/>
    <property type="project" value="MTBBASE"/>
</dbReference>
<dbReference type="CDD" id="cd06171">
    <property type="entry name" value="Sigma70_r4"/>
    <property type="match status" value="1"/>
</dbReference>
<dbReference type="FunFam" id="1.10.10.10:FF:000068">
    <property type="entry name" value="RNA polymerase sigma factor"/>
    <property type="match status" value="1"/>
</dbReference>
<dbReference type="FunFam" id="1.10.1740.10:FF:000007">
    <property type="entry name" value="RNA polymerase sigma factor SigE"/>
    <property type="match status" value="1"/>
</dbReference>
<dbReference type="Gene3D" id="1.10.1740.10">
    <property type="match status" value="1"/>
</dbReference>
<dbReference type="Gene3D" id="1.10.10.10">
    <property type="entry name" value="Winged helix-like DNA-binding domain superfamily/Winged helix DNA-binding domain"/>
    <property type="match status" value="1"/>
</dbReference>
<dbReference type="InterPro" id="IPR039425">
    <property type="entry name" value="RNA_pol_sigma-70-like"/>
</dbReference>
<dbReference type="InterPro" id="IPR014284">
    <property type="entry name" value="RNA_pol_sigma-70_dom"/>
</dbReference>
<dbReference type="InterPro" id="IPR007627">
    <property type="entry name" value="RNA_pol_sigma70_r2"/>
</dbReference>
<dbReference type="InterPro" id="IPR013249">
    <property type="entry name" value="RNA_pol_sigma70_r4_t2"/>
</dbReference>
<dbReference type="InterPro" id="IPR013325">
    <property type="entry name" value="RNA_pol_sigma_r2"/>
</dbReference>
<dbReference type="InterPro" id="IPR013324">
    <property type="entry name" value="RNA_pol_sigma_r3/r4-like"/>
</dbReference>
<dbReference type="InterPro" id="IPR036388">
    <property type="entry name" value="WH-like_DNA-bd_sf"/>
</dbReference>
<dbReference type="NCBIfam" id="NF007229">
    <property type="entry name" value="PRK09647.1"/>
    <property type="match status" value="1"/>
</dbReference>
<dbReference type="NCBIfam" id="TIGR02937">
    <property type="entry name" value="sigma70-ECF"/>
    <property type="match status" value="1"/>
</dbReference>
<dbReference type="PANTHER" id="PTHR43133">
    <property type="entry name" value="RNA POLYMERASE ECF-TYPE SIGMA FACTO"/>
    <property type="match status" value="1"/>
</dbReference>
<dbReference type="PANTHER" id="PTHR43133:SF8">
    <property type="entry name" value="RNA POLYMERASE SIGMA FACTOR HI_1459-RELATED"/>
    <property type="match status" value="1"/>
</dbReference>
<dbReference type="Pfam" id="PF04542">
    <property type="entry name" value="Sigma70_r2"/>
    <property type="match status" value="1"/>
</dbReference>
<dbReference type="Pfam" id="PF08281">
    <property type="entry name" value="Sigma70_r4_2"/>
    <property type="match status" value="1"/>
</dbReference>
<dbReference type="SUPFAM" id="SSF88946">
    <property type="entry name" value="Sigma2 domain of RNA polymerase sigma factors"/>
    <property type="match status" value="1"/>
</dbReference>
<dbReference type="SUPFAM" id="SSF88659">
    <property type="entry name" value="Sigma3 and sigma4 domains of RNA polymerase sigma factors"/>
    <property type="match status" value="1"/>
</dbReference>
<gene>
    <name type="primary">sigE</name>
    <name type="ordered locus">Rv1221</name>
</gene>
<proteinExistence type="evidence at protein level"/>
<sequence>MELLGGPRVGNTESQLCVADGDDLPTYCSANSEDLNITTITTLSPTSMSHPQQVRDDQWVEPSDQLQGTAVFDATGDKATMPSWDELVRQHADRVYRLAYRLSGNQHDAEDLTQETFIRVFRSVQNYQPGTFEGWLHRITTNLFLDMVRRRARIRMEALPEDYDRVPADEPNPEQIYHDARLGPDLQAALASLPPEFRAAVVLCDIEGLSYEEIGATLGVKLGTVRSRIHRGRQALRDYLAAHPEHGECAVHVNPVR</sequence>
<name>SIGE_MYCTU</name>
<keyword id="KW-0002">3D-structure</keyword>
<keyword id="KW-0877">Alternative promoter usage</keyword>
<keyword id="KW-0238">DNA-binding</keyword>
<keyword id="KW-1185">Reference proteome</keyword>
<keyword id="KW-0731">Sigma factor</keyword>
<keyword id="KW-0804">Transcription</keyword>
<keyword id="KW-0805">Transcription regulation</keyword>
<accession>P9WGG7</accession>
<accession>F2GFW7</accession>
<accession>O06289</accession>
<accession>Q79FQ9</accession>
<accession>Q7D8K8</accession>
<comment type="function">
    <text evidence="4 9 10 11">Sigma factors are initiation factors that promote the attachment of RNA polymerase to specific initiation sites and are then released. Extracytoplasmic function (ECF) sigma factors are held in an inactive form by an anti-sigma factor until released. Responds to heat shock and surface stress (detergent exposure). When combined with isolated core RNA polymerase from M.smegmatis is able to guide initiation from the sigB promoter. Required for full expression of sigB, and for sigB induction after detergent exposure but not after heat shock. Controls a regulon of about 38 genes in culture (PubMed:11489128) and about 16 genes during macrophage infection (PubMed:18657035), most of which have decreased expression in a disruption mutant. Probably down regulates the host immune response to mycobacterial infection.</text>
</comment>
<comment type="subunit">
    <text evidence="8 10">Interacts transiently with the RNA polymerase catalytic core formed by RpoA, RpoB, RpoC and RpoZ (2 alpha, 1 beta, 1 beta' and 1 omega subunit) to form the RNA polymerase holoenzyme that can initiate transcription. Interacts (via sigma-70 factor domain 4) with cognate anti-sigma-E factor RseA under reducing conditions, which stops the sigma factor from functioning. Inhibition is specific; RsaH and RsaL (anti-sigma-H and -L factors) do not inhibit SigE.</text>
</comment>
<comment type="alternative products">
    <event type="alternative promoter"/>
    <isoform>
        <id>P9WGG7-1</id>
        <name>1</name>
        <name>Sigma-E 257</name>
        <sequence type="displayed"/>
    </isoform>
    <isoform>
        <id>P9WGG7-2</id>
        <name>2</name>
        <name>Sigma-E 218</name>
        <sequence type="described" ref="VSP_047441 VSP_047443"/>
    </isoform>
    <isoform>
        <id>P9WGG7-3</id>
        <name>3</name>
        <name>Sigma-E 215</name>
        <sequence type="described" ref="VSP_047440 VSP_047442"/>
    </isoform>
</comment>
<comment type="induction">
    <text evidence="3 4 5 6">Unlike many sigma factors not directly autoregulated. Expressed from 3 promoters. P1 is 55 nucleotides upstream of the major start codon, used during normal growth, repressed by surface stress, P2 is at the start codon, under control of MprAB and is induced following surface stress and alkaline pH leading to a leader-less RNA, while P3 is 63 nucleotides downstream of the major start codon, transcribed from a SigH-responsive promoter under conditions of oxidative stress and heat shock. Expressed in exponential phase; further induced by detergent (6-fold) and heat shock (3-fold, 45 degrees Celsius) under control of SigH. Positively regulated by MprAB, as is induction by detergent. 6-fold induced by starvation, not known by which promoter.</text>
</comment>
<comment type="domain">
    <text evidence="1">The sigma-70 factor domain-2 mediates sequence-specific interaction with the -10 element in promoter DNA, and plays an important role in melting the double-stranded DNA and the formation of the transcription bubble. The sigma-70 factor domain-2 mediates interaction with the RNA polymerase subunits RpoB and RpoC (By similarity).</text>
</comment>
<comment type="domain">
    <text evidence="12">The sigma-70 factor domain-4 contains a helix-turn-helix (H-T-H) motif that mediates interaction with the -35 element in promoter DNA. The domain also mediates interaction with the RNA polymerase subunit RpoA. Interactions between sigma-70 factor domain-4 and anti-sigma factors prevents interaction of sigma factors with the RNA polymerase catalytic core (Probable).</text>
</comment>
<comment type="disruption phenotype">
    <text evidence="4 7 9">Increased susceptibility to detergent and heat shock, slighty decreased resistance to oxidative stress. Poor growth in both human and mouse macrophage-derived cell lines. Attenuated infection in both SCID and BALB/c mice. 13-fold decreased transcription of sigB, no change in its own transcript in culture. The sigE mutant induced the up-regulation of human and mouse macrophage gene expression, which correlated with an increased innate immune response.</text>
</comment>
<comment type="miscellaneous">
    <molecule>Isoform 1</molecule>
    <text>Produced following surface stress.</text>
</comment>
<comment type="miscellaneous">
    <molecule>Isoform 2</molecule>
    <text evidence="12">Produced following oxidative stress and heat shock. Shown by mutagenesis of the start codon and subsequent loss of translationally fused LacZ.</text>
</comment>
<comment type="miscellaneous">
    <molecule>Isoform 3</molecule>
    <text evidence="12">Produced following oxidative stress and heat shock. Able to interact with RseA. Shown by mutagenesis of the start codon and subsequent loss of translationally fused LacZ.</text>
</comment>
<comment type="similarity">
    <text evidence="12">Belongs to the sigma-70 factor family. ECF subfamily.</text>
</comment>
<organism>
    <name type="scientific">Mycobacterium tuberculosis (strain ATCC 25618 / H37Rv)</name>
    <dbReference type="NCBI Taxonomy" id="83332"/>
    <lineage>
        <taxon>Bacteria</taxon>
        <taxon>Bacillati</taxon>
        <taxon>Actinomycetota</taxon>
        <taxon>Actinomycetes</taxon>
        <taxon>Mycobacteriales</taxon>
        <taxon>Mycobacteriaceae</taxon>
        <taxon>Mycobacterium</taxon>
        <taxon>Mycobacterium tuberculosis complex</taxon>
    </lineage>
</organism>
<reference key="1">
    <citation type="journal article" date="1997" name="J. Bacteriol.">
        <title>A mycobacterial extracytoplasmic function sigma factor involved in survival following stress.</title>
        <authorList>
            <person name="Wu Q.L."/>
            <person name="Kong D."/>
            <person name="Lam K."/>
            <person name="Husson R.N."/>
        </authorList>
    </citation>
    <scope>NUCLEOTIDE SEQUENCE [GENOMIC DNA]</scope>
    <scope>FUNCTION AS A SIGMA FACTOR</scope>
    <source>
        <strain>ATCC 25618 / H37Rv</strain>
    </source>
</reference>
<reference key="2">
    <citation type="journal article" date="1998" name="Nature">
        <title>Deciphering the biology of Mycobacterium tuberculosis from the complete genome sequence.</title>
        <authorList>
            <person name="Cole S.T."/>
            <person name="Brosch R."/>
            <person name="Parkhill J."/>
            <person name="Garnier T."/>
            <person name="Churcher C.M."/>
            <person name="Harris D.E."/>
            <person name="Gordon S.V."/>
            <person name="Eiglmeier K."/>
            <person name="Gas S."/>
            <person name="Barry C.E. III"/>
            <person name="Tekaia F."/>
            <person name="Badcock K."/>
            <person name="Basham D."/>
            <person name="Brown D."/>
            <person name="Chillingworth T."/>
            <person name="Connor R."/>
            <person name="Davies R.M."/>
            <person name="Devlin K."/>
            <person name="Feltwell T."/>
            <person name="Gentles S."/>
            <person name="Hamlin N."/>
            <person name="Holroyd S."/>
            <person name="Hornsby T."/>
            <person name="Jagels K."/>
            <person name="Krogh A."/>
            <person name="McLean J."/>
            <person name="Moule S."/>
            <person name="Murphy L.D."/>
            <person name="Oliver S."/>
            <person name="Osborne J."/>
            <person name="Quail M.A."/>
            <person name="Rajandream M.A."/>
            <person name="Rogers J."/>
            <person name="Rutter S."/>
            <person name="Seeger K."/>
            <person name="Skelton S."/>
            <person name="Squares S."/>
            <person name="Squares R."/>
            <person name="Sulston J.E."/>
            <person name="Taylor K."/>
            <person name="Whitehead S."/>
            <person name="Barrell B.G."/>
        </authorList>
    </citation>
    <scope>NUCLEOTIDE SEQUENCE [LARGE SCALE GENOMIC DNA]</scope>
    <source>
        <strain>ATCC 25618 / H37Rv</strain>
    </source>
</reference>
<reference key="3">
    <citation type="journal article" date="1999" name="Mol. Microbiol.">
        <title>Differential expression of 10 sigma factor genes in Mycobacterium tuberculosis.</title>
        <authorList>
            <person name="Manganelli R."/>
            <person name="Dubnau E."/>
            <person name="Tyagi S."/>
            <person name="Kramer F.R."/>
            <person name="Smith I."/>
        </authorList>
    </citation>
    <scope>INDUCTION</scope>
    <source>
        <strain>ATCC 25618 / H37Rv</strain>
    </source>
</reference>
<reference key="4">
    <citation type="journal article" date="2001" name="J. Bacteriol.">
        <title>The alternative sigma factor SigH regulates major components of oxidative and heat stress responses in Mycobacterium tuberculosis.</title>
        <authorList>
            <person name="Raman S."/>
            <person name="Song T."/>
            <person name="Puyang X."/>
            <person name="Bardarov S."/>
            <person name="Jacobs W.R. Jr."/>
            <person name="Husson R.N."/>
        </authorList>
    </citation>
    <scope>INDUCTION BY SIGH</scope>
    <source>
        <strain>ATCC 25618 / H37Rv</strain>
    </source>
</reference>
<reference key="5">
    <citation type="journal article" date="2001" name="Mol. Microbiol.">
        <title>The Mycobacterium tuberculosis ECF sigma factor sigmaE: role in global gene expression and survival in macrophages.</title>
        <authorList>
            <person name="Manganelli R."/>
            <person name="Voskuil M.I."/>
            <person name="Schoolnik G.K."/>
            <person name="Smith I."/>
        </authorList>
    </citation>
    <scope>FUNCTION</scope>
    <scope>INDUCTION</scope>
    <scope>DISRUPTION PHENOTYPE IN MACROPHAGES</scope>
    <source>
        <strain>ATCC 25618 / H37Rv</strain>
    </source>
</reference>
<reference key="6">
    <citation type="journal article" date="2002" name="Mol. Microbiol.">
        <title>Evaluation of a nutrient starvation model of Mycobacterium tuberculosis persistence by gene and protein expression profiling.</title>
        <authorList>
            <person name="Betts J.C."/>
            <person name="Lukey P.T."/>
            <person name="Robb L.C."/>
            <person name="McAdam R.A."/>
            <person name="Duncan K."/>
        </authorList>
    </citation>
    <scope>INDUCTION FOLLOWING STARVATION</scope>
    <source>
        <strain>ATCC 25618 / H37Rv / NCTC 7416</strain>
    </source>
</reference>
<reference key="7">
    <citation type="journal article" date="2004" name="Infect. Immun.">
        <title>The extra cytoplasmic function sigma factor sigma(E) is essential for Mycobacterium tuberculosis virulence in mice.</title>
        <authorList>
            <person name="Manganelli R."/>
            <person name="Fattorini L."/>
            <person name="Tan D."/>
            <person name="Iona E."/>
            <person name="Orefici G."/>
            <person name="Altavilla G."/>
            <person name="Cusatelli P."/>
            <person name="Smith I."/>
        </authorList>
    </citation>
    <scope>DISRUPTION PHENOTYPE IN MICE</scope>
    <source>
        <strain>ATCC 25618 / H37Rv</strain>
    </source>
</reference>
<reference key="8">
    <citation type="journal article" date="2006" name="J. Bacteriol.">
        <title>MprAB is a stress-responsive two-component system that directly regulates expression of sigma factors SigB and SigE in Mycobacterium tuberculosis.</title>
        <authorList>
            <person name="He H."/>
            <person name="Hovey R."/>
            <person name="Kane J."/>
            <person name="Singh V."/>
            <person name="Zahrt T.C."/>
        </authorList>
    </citation>
    <scope>REGULATION BY MPRAB</scope>
    <source>
        <strain>ATCC 25618 / H37Rv</strain>
    </source>
</reference>
<reference key="9">
    <citation type="journal article" date="2007" name="Microbiology">
        <title>Evidence for complex interactions of stress-associated regulons in an mprAB deletion mutant of Mycobacterium tuberculosis.</title>
        <authorList>
            <person name="Pang X."/>
            <person name="Vu P."/>
            <person name="Byrd T.F."/>
            <person name="Ghanny S."/>
            <person name="Soteropoulos P."/>
            <person name="Mukamolova G.V."/>
            <person name="Wu S."/>
            <person name="Samten B."/>
            <person name="Howard S.T."/>
        </authorList>
    </citation>
    <scope>REGULATION BY MPRAB</scope>
    <source>
        <strain>ATCC 25618 / H37Rv</strain>
    </source>
</reference>
<reference key="10">
    <citation type="journal article" date="2008" name="J. Infect. Dis.">
        <title>Mycobacterium tuberculosis sigma factor E regulon modulates the host inflammatory response.</title>
        <authorList>
            <person name="Fontan P.A."/>
            <person name="Aris V."/>
            <person name="Alvarez M.E."/>
            <person name="Ghanny S."/>
            <person name="Cheng J."/>
            <person name="Soteropoulos P."/>
            <person name="Trevani A."/>
            <person name="Pine R."/>
            <person name="Smith I."/>
        </authorList>
    </citation>
    <scope>FUNCTION</scope>
    <scope>DISRUPTION PHENOTYPE IN MACROPHAGES</scope>
    <source>
        <strain>ATCC 25618 / H37Rv</strain>
    </source>
</reference>
<reference key="11">
    <citation type="journal article" date="2008" name="J. Bacteriol.">
        <title>Evidence of complex transcriptional, translational, and posttranslational regulation of the extracytoplasmic function sigma factor sigmaE in Mycobacterium tuberculosis.</title>
        <authorList>
            <person name="Dona V."/>
            <person name="Rodrigue S."/>
            <person name="Dainese E."/>
            <person name="Palu G."/>
            <person name="Gaudreau L."/>
            <person name="Manganelli R."/>
            <person name="Provvedi R."/>
        </authorList>
    </citation>
    <scope>REGULATION</scope>
    <scope>INTERACTION WITH RSEA</scope>
    <scope>ALTERNATIVE PROMOTER USAGE (ISOFORMS 2 AND 3)</scope>
    <source>
        <strain>ATCC 25618 / H37Rv</strain>
    </source>
</reference>
<reference key="12">
    <citation type="journal article" date="2010" name="Mol. Microbiol.">
        <title>RseA, the SigE specific anti-sigma factor of Mycobacterium tuberculosis, is inactivated by phosphorylation-dependent ClpC1P2 proteolysis.</title>
        <authorList>
            <person name="Barik S."/>
            <person name="Sureka K."/>
            <person name="Mukherjee P."/>
            <person name="Basu J."/>
            <person name="Kundu M."/>
        </authorList>
    </citation>
    <scope>FUNCTION AS A SIGMA FACTOR</scope>
    <scope>REGULATION</scope>
    <scope>INTERACTION WITH RSEA</scope>
    <source>
        <strain>ATCC 25618 / H37Rv</strain>
    </source>
</reference>
<reference key="13">
    <citation type="journal article" date="2011" name="Mol. Cell. Proteomics">
        <title>Proteogenomic analysis of Mycobacterium tuberculosis by high resolution mass spectrometry.</title>
        <authorList>
            <person name="Kelkar D.S."/>
            <person name="Kumar D."/>
            <person name="Kumar P."/>
            <person name="Balakrishnan L."/>
            <person name="Muthusamy B."/>
            <person name="Yadav A.K."/>
            <person name="Shrivastava P."/>
            <person name="Marimuthu A."/>
            <person name="Anand S."/>
            <person name="Sundaram H."/>
            <person name="Kingsbury R."/>
            <person name="Harsha H.C."/>
            <person name="Nair B."/>
            <person name="Prasad T.S."/>
            <person name="Chauhan D.S."/>
            <person name="Katoch K."/>
            <person name="Katoch V.M."/>
            <person name="Kumar P."/>
            <person name="Chaerkady R."/>
            <person name="Ramachandran S."/>
            <person name="Dash D."/>
            <person name="Pandey A."/>
        </authorList>
    </citation>
    <scope>IDENTIFICATION BY MASS SPECTROMETRY [LARGE SCALE ANALYSIS]</scope>
    <source>
        <strain>ATCC 25618 / H37Rv</strain>
    </source>
</reference>
<protein>
    <recommendedName>
        <fullName>ECF RNA polymerase sigma factor SigE</fullName>
        <shortName>ECF sigma factor SigE</shortName>
    </recommendedName>
    <alternativeName>
        <fullName>Alternative RNA polymerase sigma factor SigE</fullName>
    </alternativeName>
    <alternativeName>
        <fullName>RNA polymerase sigma-E factor</fullName>
        <shortName>Sigma-E factor</shortName>
    </alternativeName>
</protein>
<feature type="chain" id="PRO_0000422945" description="ECF RNA polymerase sigma factor SigE">
    <location>
        <begin position="1"/>
        <end position="257"/>
    </location>
</feature>
<feature type="DNA-binding region" description="H-T-H motif" evidence="1">
    <location>
        <begin position="211"/>
        <end position="230"/>
    </location>
</feature>
<feature type="region of interest" description="Sigma-70 factor domain-2">
    <location>
        <begin position="87"/>
        <end position="153"/>
    </location>
</feature>
<feature type="region of interest" description="Sigma-70 factor domain-4">
    <location>
        <begin position="186"/>
        <end position="236"/>
    </location>
</feature>
<feature type="short sequence motif" description="Polymerase core binding" evidence="2">
    <location>
        <begin position="111"/>
        <end position="114"/>
    </location>
</feature>
<feature type="splice variant" id="VSP_047441" description="In isoform 2." evidence="12">
    <location>
        <begin position="1"/>
        <end position="42"/>
    </location>
</feature>
<feature type="splice variant" id="VSP_047440" description="In isoform 3." evidence="12">
    <location>
        <begin position="1"/>
        <end position="39"/>
    </location>
</feature>
<feature type="splice variant" id="VSP_047442" description="In isoform 3." evidence="12">
    <original>I</original>
    <variation>M</variation>
    <location>
        <position position="40"/>
    </location>
</feature>
<feature type="splice variant" id="VSP_047443" description="In isoform 2." evidence="12">
    <original>L</original>
    <variation>M</variation>
    <location>
        <position position="43"/>
    </location>
</feature>
<feature type="strand" evidence="13">
    <location>
        <begin position="156"/>
        <end position="158"/>
    </location>
</feature>
<feature type="helix" evidence="13">
    <location>
        <begin position="163"/>
        <end position="165"/>
    </location>
</feature>
<feature type="helix" evidence="13">
    <location>
        <begin position="173"/>
        <end position="180"/>
    </location>
</feature>
<feature type="helix" evidence="13">
    <location>
        <begin position="184"/>
        <end position="187"/>
    </location>
</feature>